<keyword id="KW-0963">Cytoplasm</keyword>
<keyword id="KW-0460">Magnesium</keyword>
<keyword id="KW-0479">Metal-binding</keyword>
<keyword id="KW-0548">Nucleotidyltransferase</keyword>
<keyword id="KW-0694">RNA-binding</keyword>
<keyword id="KW-0808">Transferase</keyword>
<proteinExistence type="inferred from homology"/>
<name>PNP_EXISA</name>
<sequence>MLGTKQVFSTEWGGRPLSVEVGQLAKQANGSALVRYGDTVVLATVTASKAPKDLDFFPLTVNYEEKLYSVGKIPGGFLRREGRPGENAILTSRLIDRPIRPLFPDGFRHDIQVMIYVMSNDPDCSAEMAGMLGTSIALSISDVPFDGPIAGVTVGRVDGEFVINPTTAQLEKTDLELQVAGTSTAINMVEAGANEVPEDVMLESILFGHEEIKRLIAFQQEIVEAVGKPKFEYTVSKYDEALTAELEAARPEIVEAVQVEEKHARDEAINEVIAKYVAMYEARLADEPSKLGEVSGILNKFVKDEVRRLITVEKVRPDGRRPDVIRPLASEVGLLPRAHGVGLFTRGQTQVMSVATLGVIGDAQIIDGIGLEENKRFMHHYNFPPFSVGEARPVRAPGRREIGHGALGERALLPIIPKEADFPYTIRLVSEVLESNGSSSQASICGSTLALMDAGVPIKAPVAGIAMGLIMEGEHYTVLTDIQGLEDHLGDMDFKVAGTKDGITALQMDIKIAGITREILEEALEQARVGRLHILDHMLETLETPRTQLSKYAPKIVTMTINPDKIRDVIGPGGKMINSIIDQTGVKIDIEQDGTVFIASTDQEGIDLAMSMIGDIVREVVVGEVYDATVRRIEKFGAFVELFKGKDALVHVSEFSLERVANVEDVVKLGDSIQVKVTEIDDKGRVNASRKALILEGLSPEEREAYEAKRKAARESRPPRDSRPPRRDGDRRPPRSTN</sequence>
<accession>C4L6J6</accession>
<reference key="1">
    <citation type="journal article" date="2011" name="J. Bacteriol.">
        <title>Complete genome sequence of the Thermophilic Bacterium Exiguobacterium sp. AT1b.</title>
        <authorList>
            <person name="Vishnivetskaya T.A."/>
            <person name="Lucas S."/>
            <person name="Copeland A."/>
            <person name="Lapidus A."/>
            <person name="Glavina del Rio T."/>
            <person name="Dalin E."/>
            <person name="Tice H."/>
            <person name="Bruce D.C."/>
            <person name="Goodwin L.A."/>
            <person name="Pitluck S."/>
            <person name="Saunders E."/>
            <person name="Brettin T."/>
            <person name="Detter C."/>
            <person name="Han C."/>
            <person name="Larimer F."/>
            <person name="Land M.L."/>
            <person name="Hauser L.J."/>
            <person name="Kyrpides N.C."/>
            <person name="Ovchinnikova G."/>
            <person name="Kathariou S."/>
            <person name="Ramaley R.F."/>
            <person name="Rodrigues D.F."/>
            <person name="Hendrix C."/>
            <person name="Richardson P."/>
            <person name="Tiedje J.M."/>
        </authorList>
    </citation>
    <scope>NUCLEOTIDE SEQUENCE [LARGE SCALE GENOMIC DNA]</scope>
    <source>
        <strain>ATCC BAA-1283 / AT1b</strain>
    </source>
</reference>
<dbReference type="EC" id="2.7.7.8" evidence="1"/>
<dbReference type="EMBL" id="CP001615">
    <property type="protein sequence ID" value="ACQ71875.1"/>
    <property type="molecule type" value="Genomic_DNA"/>
</dbReference>
<dbReference type="RefSeq" id="WP_015881434.1">
    <property type="nucleotide sequence ID" value="NC_012673.1"/>
</dbReference>
<dbReference type="SMR" id="C4L6J6"/>
<dbReference type="STRING" id="360911.EAT1b_2961"/>
<dbReference type="KEGG" id="eat:EAT1b_2961"/>
<dbReference type="eggNOG" id="COG1185">
    <property type="taxonomic scope" value="Bacteria"/>
</dbReference>
<dbReference type="HOGENOM" id="CLU_004217_2_2_9"/>
<dbReference type="OrthoDB" id="9804305at2"/>
<dbReference type="Proteomes" id="UP000000716">
    <property type="component" value="Chromosome"/>
</dbReference>
<dbReference type="GO" id="GO:0005829">
    <property type="term" value="C:cytosol"/>
    <property type="evidence" value="ECO:0007669"/>
    <property type="project" value="TreeGrafter"/>
</dbReference>
<dbReference type="GO" id="GO:0000175">
    <property type="term" value="F:3'-5'-RNA exonuclease activity"/>
    <property type="evidence" value="ECO:0007669"/>
    <property type="project" value="TreeGrafter"/>
</dbReference>
<dbReference type="GO" id="GO:0000287">
    <property type="term" value="F:magnesium ion binding"/>
    <property type="evidence" value="ECO:0007669"/>
    <property type="project" value="UniProtKB-UniRule"/>
</dbReference>
<dbReference type="GO" id="GO:0004654">
    <property type="term" value="F:polyribonucleotide nucleotidyltransferase activity"/>
    <property type="evidence" value="ECO:0007669"/>
    <property type="project" value="UniProtKB-UniRule"/>
</dbReference>
<dbReference type="GO" id="GO:0003723">
    <property type="term" value="F:RNA binding"/>
    <property type="evidence" value="ECO:0007669"/>
    <property type="project" value="UniProtKB-UniRule"/>
</dbReference>
<dbReference type="GO" id="GO:0006402">
    <property type="term" value="P:mRNA catabolic process"/>
    <property type="evidence" value="ECO:0007669"/>
    <property type="project" value="UniProtKB-UniRule"/>
</dbReference>
<dbReference type="GO" id="GO:0006396">
    <property type="term" value="P:RNA processing"/>
    <property type="evidence" value="ECO:0007669"/>
    <property type="project" value="InterPro"/>
</dbReference>
<dbReference type="CDD" id="cd02393">
    <property type="entry name" value="KH-I_PNPase"/>
    <property type="match status" value="1"/>
</dbReference>
<dbReference type="CDD" id="cd11363">
    <property type="entry name" value="RNase_PH_PNPase_1"/>
    <property type="match status" value="1"/>
</dbReference>
<dbReference type="CDD" id="cd11364">
    <property type="entry name" value="RNase_PH_PNPase_2"/>
    <property type="match status" value="1"/>
</dbReference>
<dbReference type="CDD" id="cd04472">
    <property type="entry name" value="S1_PNPase"/>
    <property type="match status" value="1"/>
</dbReference>
<dbReference type="FunFam" id="2.40.50.140:FF:000023">
    <property type="entry name" value="Polyribonucleotide nucleotidyltransferase"/>
    <property type="match status" value="1"/>
</dbReference>
<dbReference type="FunFam" id="3.30.1370.10:FF:000001">
    <property type="entry name" value="Polyribonucleotide nucleotidyltransferase"/>
    <property type="match status" value="1"/>
</dbReference>
<dbReference type="FunFam" id="3.30.230.70:FF:000001">
    <property type="entry name" value="Polyribonucleotide nucleotidyltransferase"/>
    <property type="match status" value="1"/>
</dbReference>
<dbReference type="FunFam" id="3.30.230.70:FF:000002">
    <property type="entry name" value="Polyribonucleotide nucleotidyltransferase"/>
    <property type="match status" value="1"/>
</dbReference>
<dbReference type="Gene3D" id="3.30.230.70">
    <property type="entry name" value="GHMP Kinase, N-terminal domain"/>
    <property type="match status" value="2"/>
</dbReference>
<dbReference type="Gene3D" id="3.30.1370.10">
    <property type="entry name" value="K Homology domain, type 1"/>
    <property type="match status" value="1"/>
</dbReference>
<dbReference type="Gene3D" id="2.40.50.140">
    <property type="entry name" value="Nucleic acid-binding proteins"/>
    <property type="match status" value="1"/>
</dbReference>
<dbReference type="HAMAP" id="MF_01595">
    <property type="entry name" value="PNPase"/>
    <property type="match status" value="1"/>
</dbReference>
<dbReference type="InterPro" id="IPR001247">
    <property type="entry name" value="ExoRNase_PH_dom1"/>
</dbReference>
<dbReference type="InterPro" id="IPR015847">
    <property type="entry name" value="ExoRNase_PH_dom2"/>
</dbReference>
<dbReference type="InterPro" id="IPR036345">
    <property type="entry name" value="ExoRNase_PH_dom2_sf"/>
</dbReference>
<dbReference type="InterPro" id="IPR004087">
    <property type="entry name" value="KH_dom"/>
</dbReference>
<dbReference type="InterPro" id="IPR004088">
    <property type="entry name" value="KH_dom_type_1"/>
</dbReference>
<dbReference type="InterPro" id="IPR036612">
    <property type="entry name" value="KH_dom_type_1_sf"/>
</dbReference>
<dbReference type="InterPro" id="IPR012340">
    <property type="entry name" value="NA-bd_OB-fold"/>
</dbReference>
<dbReference type="InterPro" id="IPR012162">
    <property type="entry name" value="PNPase"/>
</dbReference>
<dbReference type="InterPro" id="IPR027408">
    <property type="entry name" value="PNPase/RNase_PH_dom_sf"/>
</dbReference>
<dbReference type="InterPro" id="IPR015848">
    <property type="entry name" value="PNPase_PH_RNA-bd_bac/org-type"/>
</dbReference>
<dbReference type="InterPro" id="IPR020568">
    <property type="entry name" value="Ribosomal_Su5_D2-typ_SF"/>
</dbReference>
<dbReference type="InterPro" id="IPR003029">
    <property type="entry name" value="S1_domain"/>
</dbReference>
<dbReference type="NCBIfam" id="TIGR03591">
    <property type="entry name" value="polynuc_phos"/>
    <property type="match status" value="1"/>
</dbReference>
<dbReference type="NCBIfam" id="NF008805">
    <property type="entry name" value="PRK11824.1"/>
    <property type="match status" value="1"/>
</dbReference>
<dbReference type="PANTHER" id="PTHR11252">
    <property type="entry name" value="POLYRIBONUCLEOTIDE NUCLEOTIDYLTRANSFERASE"/>
    <property type="match status" value="1"/>
</dbReference>
<dbReference type="PANTHER" id="PTHR11252:SF0">
    <property type="entry name" value="POLYRIBONUCLEOTIDE NUCLEOTIDYLTRANSFERASE 1, MITOCHONDRIAL"/>
    <property type="match status" value="1"/>
</dbReference>
<dbReference type="Pfam" id="PF00013">
    <property type="entry name" value="KH_1"/>
    <property type="match status" value="1"/>
</dbReference>
<dbReference type="Pfam" id="PF03726">
    <property type="entry name" value="PNPase"/>
    <property type="match status" value="1"/>
</dbReference>
<dbReference type="Pfam" id="PF01138">
    <property type="entry name" value="RNase_PH"/>
    <property type="match status" value="2"/>
</dbReference>
<dbReference type="Pfam" id="PF03725">
    <property type="entry name" value="RNase_PH_C"/>
    <property type="match status" value="2"/>
</dbReference>
<dbReference type="Pfam" id="PF00575">
    <property type="entry name" value="S1"/>
    <property type="match status" value="1"/>
</dbReference>
<dbReference type="PIRSF" id="PIRSF005499">
    <property type="entry name" value="PNPase"/>
    <property type="match status" value="1"/>
</dbReference>
<dbReference type="SMART" id="SM00322">
    <property type="entry name" value="KH"/>
    <property type="match status" value="1"/>
</dbReference>
<dbReference type="SMART" id="SM00316">
    <property type="entry name" value="S1"/>
    <property type="match status" value="1"/>
</dbReference>
<dbReference type="SUPFAM" id="SSF54791">
    <property type="entry name" value="Eukaryotic type KH-domain (KH-domain type I)"/>
    <property type="match status" value="1"/>
</dbReference>
<dbReference type="SUPFAM" id="SSF50249">
    <property type="entry name" value="Nucleic acid-binding proteins"/>
    <property type="match status" value="1"/>
</dbReference>
<dbReference type="SUPFAM" id="SSF55666">
    <property type="entry name" value="Ribonuclease PH domain 2-like"/>
    <property type="match status" value="2"/>
</dbReference>
<dbReference type="SUPFAM" id="SSF54211">
    <property type="entry name" value="Ribosomal protein S5 domain 2-like"/>
    <property type="match status" value="2"/>
</dbReference>
<dbReference type="PROSITE" id="PS50084">
    <property type="entry name" value="KH_TYPE_1"/>
    <property type="match status" value="1"/>
</dbReference>
<dbReference type="PROSITE" id="PS50126">
    <property type="entry name" value="S1"/>
    <property type="match status" value="1"/>
</dbReference>
<feature type="chain" id="PRO_1000215659" description="Polyribonucleotide nucleotidyltransferase">
    <location>
        <begin position="1"/>
        <end position="738"/>
    </location>
</feature>
<feature type="domain" description="KH" evidence="1">
    <location>
        <begin position="554"/>
        <end position="613"/>
    </location>
</feature>
<feature type="domain" description="S1 motif" evidence="1">
    <location>
        <begin position="623"/>
        <end position="691"/>
    </location>
</feature>
<feature type="region of interest" description="Disordered" evidence="2">
    <location>
        <begin position="704"/>
        <end position="738"/>
    </location>
</feature>
<feature type="binding site" evidence="1">
    <location>
        <position position="487"/>
    </location>
    <ligand>
        <name>Mg(2+)</name>
        <dbReference type="ChEBI" id="CHEBI:18420"/>
    </ligand>
</feature>
<feature type="binding site" evidence="1">
    <location>
        <position position="493"/>
    </location>
    <ligand>
        <name>Mg(2+)</name>
        <dbReference type="ChEBI" id="CHEBI:18420"/>
    </ligand>
</feature>
<organism>
    <name type="scientific">Exiguobacterium sp. (strain ATCC BAA-1283 / AT1b)</name>
    <dbReference type="NCBI Taxonomy" id="360911"/>
    <lineage>
        <taxon>Bacteria</taxon>
        <taxon>Bacillati</taxon>
        <taxon>Bacillota</taxon>
        <taxon>Bacilli</taxon>
        <taxon>Bacillales</taxon>
        <taxon>Bacillales Family XII. Incertae Sedis</taxon>
        <taxon>Exiguobacterium</taxon>
    </lineage>
</organism>
<comment type="function">
    <text evidence="1">Involved in mRNA degradation. Catalyzes the phosphorolysis of single-stranded polyribonucleotides processively in the 3'- to 5'-direction.</text>
</comment>
<comment type="catalytic activity">
    <reaction evidence="1">
        <text>RNA(n+1) + phosphate = RNA(n) + a ribonucleoside 5'-diphosphate</text>
        <dbReference type="Rhea" id="RHEA:22096"/>
        <dbReference type="Rhea" id="RHEA-COMP:14527"/>
        <dbReference type="Rhea" id="RHEA-COMP:17342"/>
        <dbReference type="ChEBI" id="CHEBI:43474"/>
        <dbReference type="ChEBI" id="CHEBI:57930"/>
        <dbReference type="ChEBI" id="CHEBI:140395"/>
        <dbReference type="EC" id="2.7.7.8"/>
    </reaction>
</comment>
<comment type="cofactor">
    <cofactor evidence="1">
        <name>Mg(2+)</name>
        <dbReference type="ChEBI" id="CHEBI:18420"/>
    </cofactor>
</comment>
<comment type="subcellular location">
    <subcellularLocation>
        <location evidence="1">Cytoplasm</location>
    </subcellularLocation>
</comment>
<comment type="similarity">
    <text evidence="1">Belongs to the polyribonucleotide nucleotidyltransferase family.</text>
</comment>
<gene>
    <name evidence="1" type="primary">pnp</name>
    <name type="ordered locus">EAT1b_2961</name>
</gene>
<evidence type="ECO:0000255" key="1">
    <source>
        <dbReference type="HAMAP-Rule" id="MF_01595"/>
    </source>
</evidence>
<evidence type="ECO:0000256" key="2">
    <source>
        <dbReference type="SAM" id="MobiDB-lite"/>
    </source>
</evidence>
<protein>
    <recommendedName>
        <fullName evidence="1">Polyribonucleotide nucleotidyltransferase</fullName>
        <ecNumber evidence="1">2.7.7.8</ecNumber>
    </recommendedName>
    <alternativeName>
        <fullName evidence="1">Polynucleotide phosphorylase</fullName>
        <shortName evidence="1">PNPase</shortName>
    </alternativeName>
</protein>